<feature type="chain" id="PRO_0000066428" description="Uncharacterized protein ORF3">
    <location>
        <begin position="1"/>
        <end position="197"/>
    </location>
</feature>
<proteinExistence type="predicted"/>
<geneLocation type="plasmid">
    <name>pFV1</name>
</geneLocation>
<protein>
    <recommendedName>
        <fullName>Uncharacterized protein ORF3</fullName>
    </recommendedName>
</protein>
<dbReference type="EMBL" id="X68366">
    <property type="protein sequence ID" value="CAA48427.1"/>
    <property type="molecule type" value="Genomic_DNA"/>
</dbReference>
<dbReference type="PIR" id="S30303">
    <property type="entry name" value="S26438"/>
</dbReference>
<dbReference type="RefSeq" id="NP_039756.1">
    <property type="nucleotide sequence ID" value="NC_001336.1"/>
</dbReference>
<dbReference type="RefSeq" id="WP_010889842.1">
    <property type="nucleotide sequence ID" value="NC_001336.1"/>
</dbReference>
<organism>
    <name type="scientific">Methanothermobacter thermautotrophicus</name>
    <name type="common">Methanobacterium thermoformicicum</name>
    <dbReference type="NCBI Taxonomy" id="145262"/>
    <lineage>
        <taxon>Archaea</taxon>
        <taxon>Methanobacteriati</taxon>
        <taxon>Methanobacteriota</taxon>
        <taxon>Methanomada group</taxon>
        <taxon>Methanobacteria</taxon>
        <taxon>Methanobacteriales</taxon>
        <taxon>Methanobacteriaceae</taxon>
        <taxon>Methanothermobacter</taxon>
    </lineage>
</organism>
<name>YPV3_METTF</name>
<sequence length="197" mass="22467">MNLRQKVIETLEEGKSVAIKYQDVRDYLDLKTGHRVIFLEHVNPAKETAAEILADLGNLAKSTIYSKYTTNEIVRDIKKRSKNRNVLLVFNDFQLLSKNTARVLLDLMEDVQVLCSIRGRPQKGQGRLLKRMTILSDRSDEVTDIKIPLIVFASFIAILTFVKAGSTIYNRNHFDFYLFSAAIFVGISVGRTLLWIS</sequence>
<accession>P29573</accession>
<reference key="1">
    <citation type="journal article" date="1992" name="Nucleic Acids Res.">
        <title>Modular organization of related Archaeal plasmids encoding different restriction-modification systems in Methanobacterium thermoformicicum.</title>
        <authorList>
            <person name="Noelling J."/>
            <person name="van Eeden F.J.M."/>
            <person name="Eggen R.I.L."/>
            <person name="de Vos W.M."/>
        </authorList>
    </citation>
    <scope>NUCLEOTIDE SEQUENCE [GENOMIC DNA]</scope>
    <source>
        <strain>DSM 3848 / THF</strain>
    </source>
</reference>
<keyword id="KW-0614">Plasmid</keyword>